<gene>
    <name evidence="1" type="primary">rplP</name>
    <name type="ordered locus">Cj1700c</name>
</gene>
<comment type="function">
    <text evidence="1">Binds 23S rRNA and is also seen to make contacts with the A and possibly P site tRNAs.</text>
</comment>
<comment type="subunit">
    <text evidence="1">Part of the 50S ribosomal subunit.</text>
</comment>
<comment type="similarity">
    <text evidence="1">Belongs to the universal ribosomal protein uL16 family.</text>
</comment>
<proteinExistence type="inferred from homology"/>
<sequence length="141" mass="16375">MLMPKRTKYRKMMKGRNRGYANRGTEFTFGEFALKATEAGRINSRQIEAARIALTRFVKRQGKTWIRVFPDKPLTKKPLETRMGKGKGAVEEWVMNIKPGRIIYEMAGVSEEMAREALTLAMHKLPFKTKFVTRESQNEIY</sequence>
<feature type="chain" id="PRO_0000062070" description="Large ribosomal subunit protein uL16">
    <location>
        <begin position="1"/>
        <end position="141"/>
    </location>
</feature>
<name>RL16_CAMJE</name>
<dbReference type="EMBL" id="AL111168">
    <property type="protein sequence ID" value="CAL35794.1"/>
    <property type="molecule type" value="Genomic_DNA"/>
</dbReference>
<dbReference type="PIR" id="H81267">
    <property type="entry name" value="H81267"/>
</dbReference>
<dbReference type="RefSeq" id="WP_002779441.1">
    <property type="nucleotide sequence ID" value="NZ_SZUC01000002.1"/>
</dbReference>
<dbReference type="RefSeq" id="YP_002345066.1">
    <property type="nucleotide sequence ID" value="NC_002163.1"/>
</dbReference>
<dbReference type="SMR" id="Q9PLX8"/>
<dbReference type="IntAct" id="Q9PLX8">
    <property type="interactions" value="7"/>
</dbReference>
<dbReference type="STRING" id="192222.Cj1700c"/>
<dbReference type="PaxDb" id="192222-Cj1700c"/>
<dbReference type="EnsemblBacteria" id="CAL35794">
    <property type="protein sequence ID" value="CAL35794"/>
    <property type="gene ID" value="Cj1700c"/>
</dbReference>
<dbReference type="GeneID" id="66544936"/>
<dbReference type="GeneID" id="905974"/>
<dbReference type="KEGG" id="cje:Cj1700c"/>
<dbReference type="PATRIC" id="fig|192222.6.peg.1674"/>
<dbReference type="eggNOG" id="COG0197">
    <property type="taxonomic scope" value="Bacteria"/>
</dbReference>
<dbReference type="HOGENOM" id="CLU_078858_2_1_7"/>
<dbReference type="OrthoDB" id="9802589at2"/>
<dbReference type="PRO" id="PR:Q9PLX8"/>
<dbReference type="Proteomes" id="UP000000799">
    <property type="component" value="Chromosome"/>
</dbReference>
<dbReference type="GO" id="GO:0022625">
    <property type="term" value="C:cytosolic large ribosomal subunit"/>
    <property type="evidence" value="ECO:0007669"/>
    <property type="project" value="TreeGrafter"/>
</dbReference>
<dbReference type="GO" id="GO:0019843">
    <property type="term" value="F:rRNA binding"/>
    <property type="evidence" value="ECO:0007669"/>
    <property type="project" value="UniProtKB-UniRule"/>
</dbReference>
<dbReference type="GO" id="GO:0003735">
    <property type="term" value="F:structural constituent of ribosome"/>
    <property type="evidence" value="ECO:0007669"/>
    <property type="project" value="InterPro"/>
</dbReference>
<dbReference type="GO" id="GO:0000049">
    <property type="term" value="F:tRNA binding"/>
    <property type="evidence" value="ECO:0007669"/>
    <property type="project" value="UniProtKB-KW"/>
</dbReference>
<dbReference type="GO" id="GO:0006412">
    <property type="term" value="P:translation"/>
    <property type="evidence" value="ECO:0007669"/>
    <property type="project" value="UniProtKB-UniRule"/>
</dbReference>
<dbReference type="CDD" id="cd01433">
    <property type="entry name" value="Ribosomal_L16_L10e"/>
    <property type="match status" value="1"/>
</dbReference>
<dbReference type="FunFam" id="3.90.1170.10:FF:000001">
    <property type="entry name" value="50S ribosomal protein L16"/>
    <property type="match status" value="1"/>
</dbReference>
<dbReference type="Gene3D" id="3.90.1170.10">
    <property type="entry name" value="Ribosomal protein L10e/L16"/>
    <property type="match status" value="1"/>
</dbReference>
<dbReference type="HAMAP" id="MF_01342">
    <property type="entry name" value="Ribosomal_uL16"/>
    <property type="match status" value="1"/>
</dbReference>
<dbReference type="InterPro" id="IPR047873">
    <property type="entry name" value="Ribosomal_uL16"/>
</dbReference>
<dbReference type="InterPro" id="IPR000114">
    <property type="entry name" value="Ribosomal_uL16_bact-type"/>
</dbReference>
<dbReference type="InterPro" id="IPR020798">
    <property type="entry name" value="Ribosomal_uL16_CS"/>
</dbReference>
<dbReference type="InterPro" id="IPR016180">
    <property type="entry name" value="Ribosomal_uL16_dom"/>
</dbReference>
<dbReference type="InterPro" id="IPR036920">
    <property type="entry name" value="Ribosomal_uL16_sf"/>
</dbReference>
<dbReference type="NCBIfam" id="TIGR01164">
    <property type="entry name" value="rplP_bact"/>
    <property type="match status" value="1"/>
</dbReference>
<dbReference type="PANTHER" id="PTHR12220">
    <property type="entry name" value="50S/60S RIBOSOMAL PROTEIN L16"/>
    <property type="match status" value="1"/>
</dbReference>
<dbReference type="PANTHER" id="PTHR12220:SF13">
    <property type="entry name" value="LARGE RIBOSOMAL SUBUNIT PROTEIN UL16M"/>
    <property type="match status" value="1"/>
</dbReference>
<dbReference type="Pfam" id="PF00252">
    <property type="entry name" value="Ribosomal_L16"/>
    <property type="match status" value="1"/>
</dbReference>
<dbReference type="PRINTS" id="PR00060">
    <property type="entry name" value="RIBOSOMALL16"/>
</dbReference>
<dbReference type="SUPFAM" id="SSF54686">
    <property type="entry name" value="Ribosomal protein L16p/L10e"/>
    <property type="match status" value="1"/>
</dbReference>
<dbReference type="PROSITE" id="PS00701">
    <property type="entry name" value="RIBOSOMAL_L16_2"/>
    <property type="match status" value="1"/>
</dbReference>
<accession>Q9PLX8</accession>
<accession>Q0P7T1</accession>
<organism>
    <name type="scientific">Campylobacter jejuni subsp. jejuni serotype O:2 (strain ATCC 700819 / NCTC 11168)</name>
    <dbReference type="NCBI Taxonomy" id="192222"/>
    <lineage>
        <taxon>Bacteria</taxon>
        <taxon>Pseudomonadati</taxon>
        <taxon>Campylobacterota</taxon>
        <taxon>Epsilonproteobacteria</taxon>
        <taxon>Campylobacterales</taxon>
        <taxon>Campylobacteraceae</taxon>
        <taxon>Campylobacter</taxon>
    </lineage>
</organism>
<evidence type="ECO:0000255" key="1">
    <source>
        <dbReference type="HAMAP-Rule" id="MF_01342"/>
    </source>
</evidence>
<evidence type="ECO:0000305" key="2"/>
<protein>
    <recommendedName>
        <fullName evidence="1">Large ribosomal subunit protein uL16</fullName>
    </recommendedName>
    <alternativeName>
        <fullName evidence="2">50S ribosomal protein L16</fullName>
    </alternativeName>
</protein>
<keyword id="KW-1185">Reference proteome</keyword>
<keyword id="KW-0687">Ribonucleoprotein</keyword>
<keyword id="KW-0689">Ribosomal protein</keyword>
<keyword id="KW-0694">RNA-binding</keyword>
<keyword id="KW-0699">rRNA-binding</keyword>
<keyword id="KW-0820">tRNA-binding</keyword>
<reference key="1">
    <citation type="journal article" date="2000" name="Nature">
        <title>The genome sequence of the food-borne pathogen Campylobacter jejuni reveals hypervariable sequences.</title>
        <authorList>
            <person name="Parkhill J."/>
            <person name="Wren B.W."/>
            <person name="Mungall K.L."/>
            <person name="Ketley J.M."/>
            <person name="Churcher C.M."/>
            <person name="Basham D."/>
            <person name="Chillingworth T."/>
            <person name="Davies R.M."/>
            <person name="Feltwell T."/>
            <person name="Holroyd S."/>
            <person name="Jagels K."/>
            <person name="Karlyshev A.V."/>
            <person name="Moule S."/>
            <person name="Pallen M.J."/>
            <person name="Penn C.W."/>
            <person name="Quail M.A."/>
            <person name="Rajandream M.A."/>
            <person name="Rutherford K.M."/>
            <person name="van Vliet A.H.M."/>
            <person name="Whitehead S."/>
            <person name="Barrell B.G."/>
        </authorList>
    </citation>
    <scope>NUCLEOTIDE SEQUENCE [LARGE SCALE GENOMIC DNA]</scope>
    <source>
        <strain>ATCC 700819 / NCTC 11168</strain>
    </source>
</reference>